<evidence type="ECO:0000255" key="1">
    <source>
        <dbReference type="PROSITE-ProRule" id="PRU01175"/>
    </source>
</evidence>
<evidence type="ECO:0000255" key="2">
    <source>
        <dbReference type="PROSITE-ProRule" id="PRU01176"/>
    </source>
</evidence>
<evidence type="ECO:0000269" key="3">
    <source>
    </source>
</evidence>
<evidence type="ECO:0000269" key="4">
    <source>
    </source>
</evidence>
<evidence type="ECO:0000303" key="5">
    <source>
    </source>
</evidence>
<evidence type="ECO:0000305" key="6">
    <source>
    </source>
</evidence>
<evidence type="ECO:0000305" key="7">
    <source>
    </source>
</evidence>
<evidence type="ECO:0000312" key="8">
    <source>
        <dbReference type="EMBL" id="AAF96828.1"/>
    </source>
</evidence>
<evidence type="ECO:0007829" key="9">
    <source>
        <dbReference type="PDB" id="5Z7C"/>
    </source>
</evidence>
<protein>
    <recommendedName>
        <fullName evidence="5">3'3'-cGAMP-specific phosphodiesterase 3</fullName>
        <shortName evidence="5">3'3'-cGAMP PDE 3</shortName>
        <shortName evidence="5">V-cGAP3</shortName>
        <ecNumber evidence="3 4">3.1.4.-</ecNumber>
    </recommendedName>
</protein>
<keyword id="KW-0002">3D-structure</keyword>
<keyword id="KW-0378">Hydrolase</keyword>
<keyword id="KW-0464">Manganese</keyword>
<keyword id="KW-0479">Metal-binding</keyword>
<keyword id="KW-1185">Reference proteome</keyword>
<dbReference type="EC" id="3.1.4.-" evidence="3 4"/>
<dbReference type="EMBL" id="AE003853">
    <property type="protein sequence ID" value="AAF96828.1"/>
    <property type="molecule type" value="Genomic_DNA"/>
</dbReference>
<dbReference type="PIR" id="C82399">
    <property type="entry name" value="C82399"/>
</dbReference>
<dbReference type="RefSeq" id="NP_233316.1">
    <property type="nucleotide sequence ID" value="NC_002506.1"/>
</dbReference>
<dbReference type="RefSeq" id="WP_000109472.1">
    <property type="nucleotide sequence ID" value="NZ_LT906615.1"/>
</dbReference>
<dbReference type="PDB" id="5Z7C">
    <property type="method" value="X-ray"/>
    <property type="resolution" value="2.76 A"/>
    <property type="chains" value="A=10-451"/>
</dbReference>
<dbReference type="PDBsum" id="5Z7C"/>
<dbReference type="SMR" id="Q9KL18"/>
<dbReference type="STRING" id="243277.VC_A0931"/>
<dbReference type="DNASU" id="2612856"/>
<dbReference type="EnsemblBacteria" id="AAF96828">
    <property type="protein sequence ID" value="AAF96828"/>
    <property type="gene ID" value="VC_A0931"/>
</dbReference>
<dbReference type="KEGG" id="vch:VC_A0931"/>
<dbReference type="PATRIC" id="fig|243277.26.peg.3544"/>
<dbReference type="eggNOG" id="COG2206">
    <property type="taxonomic scope" value="Bacteria"/>
</dbReference>
<dbReference type="HOGENOM" id="CLU_040286_1_0_6"/>
<dbReference type="PHI-base" id="PHI:3233"/>
<dbReference type="Proteomes" id="UP000000584">
    <property type="component" value="Chromosome 2"/>
</dbReference>
<dbReference type="GO" id="GO:0004112">
    <property type="term" value="F:cyclic-nucleotide phosphodiesterase activity"/>
    <property type="evidence" value="ECO:0000314"/>
    <property type="project" value="UniProtKB"/>
</dbReference>
<dbReference type="GO" id="GO:0046872">
    <property type="term" value="F:metal ion binding"/>
    <property type="evidence" value="ECO:0007669"/>
    <property type="project" value="UniProtKB-KW"/>
</dbReference>
<dbReference type="GO" id="GO:0009214">
    <property type="term" value="P:cyclic nucleotide catabolic process"/>
    <property type="evidence" value="ECO:0000314"/>
    <property type="project" value="UniProtKB"/>
</dbReference>
<dbReference type="CDD" id="cd00077">
    <property type="entry name" value="HDc"/>
    <property type="match status" value="1"/>
</dbReference>
<dbReference type="FunFam" id="1.10.3210.10:FF:000059">
    <property type="entry name" value="Metal-dependent phosphohydrolase"/>
    <property type="match status" value="1"/>
</dbReference>
<dbReference type="FunFam" id="1.10.3210.10:FF:000018">
    <property type="entry name" value="Two-component system response regulator"/>
    <property type="match status" value="1"/>
</dbReference>
<dbReference type="Gene3D" id="1.10.3210.10">
    <property type="entry name" value="Hypothetical protein af1432"/>
    <property type="match status" value="2"/>
</dbReference>
<dbReference type="InterPro" id="IPR052020">
    <property type="entry name" value="Cyclic_di-GMP/3'3'-cGAMP_PDE"/>
</dbReference>
<dbReference type="InterPro" id="IPR003607">
    <property type="entry name" value="HD/PDEase_dom"/>
</dbReference>
<dbReference type="InterPro" id="IPR006674">
    <property type="entry name" value="HD_domain"/>
</dbReference>
<dbReference type="InterPro" id="IPR037522">
    <property type="entry name" value="HD_GYP_dom"/>
</dbReference>
<dbReference type="PANTHER" id="PTHR45228">
    <property type="entry name" value="CYCLIC DI-GMP PHOSPHODIESTERASE TM_0186-RELATED"/>
    <property type="match status" value="1"/>
</dbReference>
<dbReference type="PANTHER" id="PTHR45228:SF4">
    <property type="entry name" value="LIPOPROTEIN"/>
    <property type="match status" value="1"/>
</dbReference>
<dbReference type="Pfam" id="PF13487">
    <property type="entry name" value="HD_5"/>
    <property type="match status" value="2"/>
</dbReference>
<dbReference type="SMART" id="SM00471">
    <property type="entry name" value="HDc"/>
    <property type="match status" value="1"/>
</dbReference>
<dbReference type="SUPFAM" id="SSF109604">
    <property type="entry name" value="HD-domain/PDEase-like"/>
    <property type="match status" value="2"/>
</dbReference>
<dbReference type="PROSITE" id="PS51831">
    <property type="entry name" value="HD"/>
    <property type="match status" value="1"/>
</dbReference>
<dbReference type="PROSITE" id="PS51832">
    <property type="entry name" value="HD_GYP"/>
    <property type="match status" value="1"/>
</dbReference>
<feature type="chain" id="PRO_0000435354" description="3'3'-cGAMP-specific phosphodiesterase 3">
    <location>
        <begin position="1"/>
        <end position="460"/>
    </location>
</feature>
<feature type="domain" description="HD" evidence="1">
    <location>
        <begin position="28"/>
        <end position="189"/>
    </location>
</feature>
<feature type="domain" description="HD-GYP" evidence="2">
    <location>
        <begin position="260"/>
        <end position="455"/>
    </location>
</feature>
<feature type="active site" description="Proton donor" evidence="7">
    <location>
        <position position="321"/>
    </location>
</feature>
<feature type="binding site" evidence="7">
    <location>
        <position position="317"/>
    </location>
    <ligand>
        <name>a divalent metal cation</name>
        <dbReference type="ChEBI" id="CHEBI:60240"/>
        <label>1</label>
    </ligand>
</feature>
<feature type="binding site" evidence="7">
    <location>
        <position position="318"/>
    </location>
    <ligand>
        <name>a divalent metal cation</name>
        <dbReference type="ChEBI" id="CHEBI:60240"/>
        <label>1</label>
    </ligand>
</feature>
<feature type="binding site" evidence="7">
    <location>
        <position position="318"/>
    </location>
    <ligand>
        <name>a divalent metal cation</name>
        <dbReference type="ChEBI" id="CHEBI:60240"/>
        <label>2</label>
    </ligand>
</feature>
<feature type="binding site" evidence="7">
    <location>
        <position position="346"/>
    </location>
    <ligand>
        <name>a divalent metal cation</name>
        <dbReference type="ChEBI" id="CHEBI:60240"/>
        <label>2</label>
    </ligand>
</feature>
<feature type="binding site" evidence="7">
    <location>
        <position position="370"/>
    </location>
    <ligand>
        <name>a divalent metal cation</name>
        <dbReference type="ChEBI" id="CHEBI:60240"/>
        <label>2</label>
    </ligand>
</feature>
<feature type="binding site" evidence="7">
    <location>
        <position position="371"/>
    </location>
    <ligand>
        <name>a divalent metal cation</name>
        <dbReference type="ChEBI" id="CHEBI:60240"/>
        <label>2</label>
    </ligand>
</feature>
<feature type="binding site" evidence="7">
    <location>
        <position position="399"/>
    </location>
    <ligand>
        <name>a divalent metal cation</name>
        <dbReference type="ChEBI" id="CHEBI:60240"/>
        <label>1</label>
    </ligand>
</feature>
<feature type="mutagenesis site" description="Large decrease in enzymatic activity." evidence="4">
    <original>L</original>
    <variation>D</variation>
    <variation>H</variation>
    <location>
        <position position="13"/>
    </location>
</feature>
<feature type="mutagenesis site" description="Large decrease in enzymatic activity." evidence="4">
    <original>L</original>
    <variation>H</variation>
    <variation>K</variation>
    <variation>T</variation>
    <location>
        <position position="17"/>
    </location>
</feature>
<feature type="mutagenesis site" description="Large decrease in enzymatic activity." evidence="4">
    <original>L</original>
    <variation>D</variation>
    <variation>H</variation>
    <location>
        <position position="21"/>
    </location>
</feature>
<feature type="mutagenesis site" description="Loss of enzymatic activity." evidence="3">
    <original>HD</original>
    <variation>AA</variation>
    <location>
        <begin position="317"/>
        <end position="318"/>
    </location>
</feature>
<feature type="mutagenesis site" description="Almost loss of activity." evidence="4">
    <original>K</original>
    <variation>A</variation>
    <variation>C</variation>
    <variation>D</variation>
    <variation>N</variation>
    <variation>R</variation>
    <variation>S</variation>
    <variation>T</variation>
    <variation>V</variation>
    <location>
        <position position="321"/>
    </location>
</feature>
<feature type="helix" evidence="9">
    <location>
        <begin position="10"/>
        <end position="23"/>
    </location>
</feature>
<feature type="helix" evidence="9">
    <location>
        <begin position="31"/>
        <end position="44"/>
    </location>
</feature>
<feature type="turn" evidence="9">
    <location>
        <begin position="45"/>
        <end position="47"/>
    </location>
</feature>
<feature type="helix" evidence="9">
    <location>
        <begin position="50"/>
        <end position="61"/>
    </location>
</feature>
<feature type="turn" evidence="9">
    <location>
        <begin position="62"/>
        <end position="66"/>
    </location>
</feature>
<feature type="helix" evidence="9">
    <location>
        <begin position="96"/>
        <end position="106"/>
    </location>
</feature>
<feature type="helix" evidence="9">
    <location>
        <begin position="113"/>
        <end position="125"/>
    </location>
</feature>
<feature type="helix" evidence="9">
    <location>
        <begin position="129"/>
        <end position="148"/>
    </location>
</feature>
<feature type="helix" evidence="9">
    <location>
        <begin position="153"/>
        <end position="156"/>
    </location>
</feature>
<feature type="turn" evidence="9">
    <location>
        <begin position="157"/>
        <end position="163"/>
    </location>
</feature>
<feature type="turn" evidence="9">
    <location>
        <begin position="171"/>
        <end position="173"/>
    </location>
</feature>
<feature type="helix" evidence="9">
    <location>
        <begin position="177"/>
        <end position="179"/>
    </location>
</feature>
<feature type="helix" evidence="9">
    <location>
        <begin position="182"/>
        <end position="199"/>
    </location>
</feature>
<feature type="helix" evidence="9">
    <location>
        <begin position="202"/>
        <end position="212"/>
    </location>
</feature>
<feature type="turn" evidence="9">
    <location>
        <begin position="213"/>
        <end position="215"/>
    </location>
</feature>
<feature type="helix" evidence="9">
    <location>
        <begin position="219"/>
        <end position="230"/>
    </location>
</feature>
<feature type="helix" evidence="9">
    <location>
        <begin position="234"/>
        <end position="238"/>
    </location>
</feature>
<feature type="helix" evidence="9">
    <location>
        <begin position="243"/>
        <end position="248"/>
    </location>
</feature>
<feature type="helix" evidence="9">
    <location>
        <begin position="253"/>
        <end position="256"/>
    </location>
</feature>
<feature type="helix" evidence="9">
    <location>
        <begin position="261"/>
        <end position="278"/>
    </location>
</feature>
<feature type="turn" evidence="9">
    <location>
        <begin position="281"/>
        <end position="284"/>
    </location>
</feature>
<feature type="helix" evidence="9">
    <location>
        <begin position="285"/>
        <end position="299"/>
    </location>
</feature>
<feature type="helix" evidence="9">
    <location>
        <begin position="304"/>
        <end position="316"/>
    </location>
</feature>
<feature type="strand" evidence="9">
    <location>
        <begin position="326"/>
        <end position="328"/>
    </location>
</feature>
<feature type="turn" evidence="9">
    <location>
        <begin position="339"/>
        <end position="345"/>
    </location>
</feature>
<feature type="helix" evidence="9">
    <location>
        <begin position="346"/>
        <end position="357"/>
    </location>
</feature>
<feature type="helix" evidence="9">
    <location>
        <begin position="362"/>
        <end position="366"/>
    </location>
</feature>
<feature type="helix" evidence="9">
    <location>
        <begin position="385"/>
        <end position="404"/>
    </location>
</feature>
<feature type="helix" evidence="9">
    <location>
        <begin position="416"/>
        <end position="425"/>
    </location>
</feature>
<feature type="helix" evidence="9">
    <location>
        <begin position="434"/>
        <end position="444"/>
    </location>
</feature>
<name>CGAP3_VIBCH</name>
<comment type="function">
    <text evidence="3 4">Phosphodiesterase (PDE) that catalyzes the hydrolysis of 3'3'-cyclic GMP-AMP (3'3'-cGAMP), leading to linear 5'-pApG (PubMed:25837739, PubMed:30365951). Counteracts the function of the 3'3'-cGAMP synthase DncV, and is involved in the modulation of intracellular 3'3'-cGAMP levels. Enhances bacterial chemotaxis and inhibits intestinal colonization in vivo. Thus exerts a crucial role in regulating bacterial infectivity through catalyzing 3'3'-cGAMP degradation. Is specific for 3'3'-cGAMP since it cannot degrade other cGAMP linkage isomers (3'2'-, 2'3'-, and 2'2'-cGAMPs); is also able to hydrolyze c-di-GMP but not c-di-AMP (PubMed:25837739).</text>
</comment>
<comment type="catalytic activity">
    <reaction evidence="3 4">
        <text>3',3'-cGAMP + H2O = 5'-pApG-3' + H(+)</text>
        <dbReference type="Rhea" id="RHEA:58800"/>
        <dbReference type="ChEBI" id="CHEBI:15377"/>
        <dbReference type="ChEBI" id="CHEBI:15378"/>
        <dbReference type="ChEBI" id="CHEBI:71501"/>
        <dbReference type="ChEBI" id="CHEBI:142752"/>
    </reaction>
    <physiologicalReaction direction="left-to-right" evidence="6">
        <dbReference type="Rhea" id="RHEA:58801"/>
    </physiologicalReaction>
</comment>
<comment type="cofactor">
    <cofactor evidence="4">
        <name>Mn(2+)</name>
        <dbReference type="ChEBI" id="CHEBI:29035"/>
    </cofactor>
    <text evidence="4">Requires a divalent metal cation for activity. Likely has a bi-nuclear metal center. Has the highest enzyme activity with Mn(2+), and when incubated with Ni(2+), its activity is about 60% lower than that observed with Mn(2+).</text>
</comment>
<comment type="biophysicochemical properties">
    <phDependence>
        <text evidence="4">Optimum pH is 10.0.</text>
    </phDependence>
</comment>
<comment type="subunit">
    <text evidence="7">Monomer.</text>
</comment>
<comment type="induction">
    <text evidence="3">Expression is up-regulated by 3'3'-cGAMP production (at both mRNA and protein levels).</text>
</comment>
<comment type="domain">
    <text evidence="4">Consists of two tandem domains of about 15% identity and similar three-dimensional topology that interact to form a pseudo-dimeric structure. The N-terminal domain (residues 1-258) plays an important regulatory role in facilitating the catalytic function of the C-terminal domain (residues 259-460). The N-terminal domain alone does not show any activity. The C-terminal domain alone is much less active comparing to the full-length protein. The full-length protein is 13 times more active than the C-terminal domain alone.</text>
</comment>
<comment type="disruption phenotype">
    <text evidence="3">Significant increase in the ability to colonize the small intestine compared to the wild-type strain. No defect in biofilm formation. Enforced DncV expression in mutant cells lacking this gene causes an enhanced inhibition of chemotaxis. The double mutant lacking both VC_A0681 and VC_A0931 shows enhanced bacterial infectivity, and the triple one (VC_A0681, VC_A0210 and VC_A0931) has the highest infectivity, which demonstrates that V-cGAPs play non-redundant roles in cGAMP degradation.</text>
</comment>
<reference key="1">
    <citation type="journal article" date="2000" name="Nature">
        <title>DNA sequence of both chromosomes of the cholera pathogen Vibrio cholerae.</title>
        <authorList>
            <person name="Heidelberg J.F."/>
            <person name="Eisen J.A."/>
            <person name="Nelson W.C."/>
            <person name="Clayton R.A."/>
            <person name="Gwinn M.L."/>
            <person name="Dodson R.J."/>
            <person name="Haft D.H."/>
            <person name="Hickey E.K."/>
            <person name="Peterson J.D."/>
            <person name="Umayam L.A."/>
            <person name="Gill S.R."/>
            <person name="Nelson K.E."/>
            <person name="Read T.D."/>
            <person name="Tettelin H."/>
            <person name="Richardson D.L."/>
            <person name="Ermolaeva M.D."/>
            <person name="Vamathevan J.J."/>
            <person name="Bass S."/>
            <person name="Qin H."/>
            <person name="Dragoi I."/>
            <person name="Sellers P."/>
            <person name="McDonald L.A."/>
            <person name="Utterback T.R."/>
            <person name="Fleischmann R.D."/>
            <person name="Nierman W.C."/>
            <person name="White O."/>
            <person name="Salzberg S.L."/>
            <person name="Smith H.O."/>
            <person name="Colwell R.R."/>
            <person name="Mekalanos J.J."/>
            <person name="Venter J.C."/>
            <person name="Fraser C.M."/>
        </authorList>
    </citation>
    <scope>NUCLEOTIDE SEQUENCE [LARGE SCALE GENOMIC DNA]</scope>
    <source>
        <strain>ATCC 39315 / El Tor Inaba N16961</strain>
    </source>
</reference>
<reference key="2">
    <citation type="journal article" date="2015" name="Cell Res.">
        <title>Identification and characterization of phosphodiesterases that specifically degrade 3'3'-cyclic GMP-AMP.</title>
        <authorList>
            <person name="Gao J."/>
            <person name="Tao J."/>
            <person name="Liang W."/>
            <person name="Zhao M."/>
            <person name="Du X."/>
            <person name="Cui S."/>
            <person name="Duan H."/>
            <person name="Kan B."/>
            <person name="Su X."/>
            <person name="Jiang Z."/>
        </authorList>
    </citation>
    <scope>FUNCTION</scope>
    <scope>CATALYTIC ACTIVITY</scope>
    <scope>SUBSTRATE SPECIFICITY</scope>
    <scope>INDUCTION</scope>
    <scope>DISRUPTION PHENOTYPE</scope>
    <scope>MUTAGENESIS OF 317-HIS-ASP-318</scope>
    <source>
        <strain>ATCC 39315 / El Tor Inaba N16961</strain>
    </source>
</reference>
<reference key="3">
    <citation type="journal article" date="2018" name="J. Mol. Biol.">
        <title>Novel Mechanism for Cyclic Dinucleotide Degradation Revealed by Structural Studies of Vibrio Phosphodiesterase V-cGAP3.</title>
        <authorList>
            <person name="Deng M.J."/>
            <person name="Tao J."/>
            <person name="Chao E."/>
            <person name="Ye Z.Y."/>
            <person name="Jiang Z."/>
            <person name="Yu J."/>
            <person name="Su X.D."/>
        </authorList>
    </citation>
    <scope>X-RAY CRYSTALLOGRAPHY (2.76 ANGSTROMS) OF 10-451 OF MUTANT ALA-440/ALA-441</scope>
    <scope>FUNCTION</scope>
    <scope>CATALYTIC ACTIVITY</scope>
    <scope>COFACTOR</scope>
    <scope>BIOPHYSICOCHEMICAL PROPERTIES</scope>
    <scope>DOMAIN</scope>
    <scope>SUBUNIT</scope>
    <scope>MUTAGENESIS OF LEU-13; LEU-17; LEU-21 AND LYS-321</scope>
    <scope>REACTION MECHANISM</scope>
    <scope>ACTIVE SITE</scope>
    <source>
        <strain>ATCC 39315 / El Tor Inaba N16961</strain>
    </source>
</reference>
<sequence length="460" mass="51291">MSVAQNTFPLSELMISLTTALDMTEGQPPEHCIRCCWIGMHIGMQLELSEPELHDLFFTLLLKDAGCSSNAARICELYATDDLTFKRRYKTVGTSLSSVINFIVKNTGSEQSWTERILTTIDILKNGNDYAQELIQTRCTRGADVARELRFSEAVAQGIHSLDEHWNGQGRPEQRKGEAIPLFSRIALLAQVFDVFQMEHSIEEALQEIMARSGVWFDPKLVEVVEQLVENPRFLSGLKATDISQRVMNLPPAQAHLPLDDAYLECIVTAFGKIVDAKSPYTAGHSERVAVYTDLIARQLAISDADRIWLRRAALLHDIGKLGVSNAILDKPGKLDEAEWRAVQAHAAYTEQILYKLSPFKTLARMAGAHHEKLDGTGYPRGVNGDEISLMTRIITTADIFDALSAERPYRAAMPIDKALAIMEENLHTAIDPECFAALKKALNLLPDEYTQLPHSSDKT</sequence>
<organism>
    <name type="scientific">Vibrio cholerae serotype O1 (strain ATCC 39315 / El Tor Inaba N16961)</name>
    <dbReference type="NCBI Taxonomy" id="243277"/>
    <lineage>
        <taxon>Bacteria</taxon>
        <taxon>Pseudomonadati</taxon>
        <taxon>Pseudomonadota</taxon>
        <taxon>Gammaproteobacteria</taxon>
        <taxon>Vibrionales</taxon>
        <taxon>Vibrionaceae</taxon>
        <taxon>Vibrio</taxon>
    </lineage>
</organism>
<accession>Q9KL18</accession>
<gene>
    <name evidence="8" type="ordered locus">VC_A0931</name>
</gene>
<proteinExistence type="evidence at protein level"/>